<name>RNH_PROA2</name>
<organism>
    <name type="scientific">Prosthecochloris aestuarii (strain DSM 271 / SK 413)</name>
    <dbReference type="NCBI Taxonomy" id="290512"/>
    <lineage>
        <taxon>Bacteria</taxon>
        <taxon>Pseudomonadati</taxon>
        <taxon>Chlorobiota</taxon>
        <taxon>Chlorobiia</taxon>
        <taxon>Chlorobiales</taxon>
        <taxon>Chlorobiaceae</taxon>
        <taxon>Prosthecochloris</taxon>
    </lineage>
</organism>
<feature type="chain" id="PRO_1000090907" description="Ribonuclease H">
    <location>
        <begin position="1"/>
        <end position="146"/>
    </location>
</feature>
<feature type="domain" description="RNase H type-1" evidence="2">
    <location>
        <begin position="1"/>
        <end position="143"/>
    </location>
</feature>
<feature type="binding site" evidence="1">
    <location>
        <position position="10"/>
    </location>
    <ligand>
        <name>Mg(2+)</name>
        <dbReference type="ChEBI" id="CHEBI:18420"/>
        <label>1</label>
    </ligand>
</feature>
<feature type="binding site" evidence="1">
    <location>
        <position position="10"/>
    </location>
    <ligand>
        <name>Mg(2+)</name>
        <dbReference type="ChEBI" id="CHEBI:18420"/>
        <label>2</label>
    </ligand>
</feature>
<feature type="binding site" evidence="1">
    <location>
        <position position="48"/>
    </location>
    <ligand>
        <name>Mg(2+)</name>
        <dbReference type="ChEBI" id="CHEBI:18420"/>
        <label>1</label>
    </ligand>
</feature>
<feature type="binding site" evidence="1">
    <location>
        <position position="70"/>
    </location>
    <ligand>
        <name>Mg(2+)</name>
        <dbReference type="ChEBI" id="CHEBI:18420"/>
        <label>1</label>
    </ligand>
</feature>
<feature type="binding site" evidence="1">
    <location>
        <position position="135"/>
    </location>
    <ligand>
        <name>Mg(2+)</name>
        <dbReference type="ChEBI" id="CHEBI:18420"/>
        <label>2</label>
    </ligand>
</feature>
<protein>
    <recommendedName>
        <fullName evidence="1">Ribonuclease H</fullName>
        <shortName evidence="1">RNase H</shortName>
        <ecNumber evidence="1">3.1.26.4</ecNumber>
    </recommendedName>
</protein>
<reference key="1">
    <citation type="submission" date="2008-06" db="EMBL/GenBank/DDBJ databases">
        <title>Complete sequence of chromosome of Prosthecochloris aestuarii DSM 271.</title>
        <authorList>
            <consortium name="US DOE Joint Genome Institute"/>
            <person name="Lucas S."/>
            <person name="Copeland A."/>
            <person name="Lapidus A."/>
            <person name="Glavina del Rio T."/>
            <person name="Dalin E."/>
            <person name="Tice H."/>
            <person name="Bruce D."/>
            <person name="Goodwin L."/>
            <person name="Pitluck S."/>
            <person name="Schmutz J."/>
            <person name="Larimer F."/>
            <person name="Land M."/>
            <person name="Hauser L."/>
            <person name="Kyrpides N."/>
            <person name="Anderson I."/>
            <person name="Liu Z."/>
            <person name="Li T."/>
            <person name="Zhao F."/>
            <person name="Overmann J."/>
            <person name="Bryant D.A."/>
            <person name="Richardson P."/>
        </authorList>
    </citation>
    <scope>NUCLEOTIDE SEQUENCE [LARGE SCALE GENOMIC DNA]</scope>
    <source>
        <strain>DSM 271 / SK 413</strain>
    </source>
</reference>
<comment type="function">
    <text evidence="1">Endonuclease that specifically degrades the RNA of RNA-DNA hybrids.</text>
</comment>
<comment type="catalytic activity">
    <reaction evidence="1">
        <text>Endonucleolytic cleavage to 5'-phosphomonoester.</text>
        <dbReference type="EC" id="3.1.26.4"/>
    </reaction>
</comment>
<comment type="cofactor">
    <cofactor evidence="1">
        <name>Mg(2+)</name>
        <dbReference type="ChEBI" id="CHEBI:18420"/>
    </cofactor>
    <text evidence="1">Binds 1 Mg(2+) ion per subunit. May bind a second metal ion at a regulatory site, or after substrate binding.</text>
</comment>
<comment type="subunit">
    <text evidence="1">Monomer.</text>
</comment>
<comment type="subcellular location">
    <subcellularLocation>
        <location evidence="1">Cytoplasm</location>
    </subcellularLocation>
</comment>
<comment type="similarity">
    <text evidence="1">Belongs to the RNase H family.</text>
</comment>
<sequence>MRKKIIIYTDGACSGNPGKGGWGALLMFGELNREISGYSPATTNNRMELMAAIQALEALKEPCDVDLYSDSSYLVNAIKLGWLKKWSSGGWTTASRKPVENQDLWKKILQLIKLHNVTFHKVKGHSDNEYNNRCDYLARQAIKNNR</sequence>
<accession>B4S5K2</accession>
<proteinExistence type="inferred from homology"/>
<dbReference type="EC" id="3.1.26.4" evidence="1"/>
<dbReference type="EMBL" id="CP001108">
    <property type="protein sequence ID" value="ACF45599.1"/>
    <property type="molecule type" value="Genomic_DNA"/>
</dbReference>
<dbReference type="RefSeq" id="WP_012505136.1">
    <property type="nucleotide sequence ID" value="NC_011059.1"/>
</dbReference>
<dbReference type="SMR" id="B4S5K2"/>
<dbReference type="STRING" id="290512.Paes_0543"/>
<dbReference type="KEGG" id="paa:Paes_0543"/>
<dbReference type="eggNOG" id="COG0328">
    <property type="taxonomic scope" value="Bacteria"/>
</dbReference>
<dbReference type="HOGENOM" id="CLU_030894_6_2_10"/>
<dbReference type="Proteomes" id="UP000002725">
    <property type="component" value="Chromosome"/>
</dbReference>
<dbReference type="GO" id="GO:0005737">
    <property type="term" value="C:cytoplasm"/>
    <property type="evidence" value="ECO:0007669"/>
    <property type="project" value="UniProtKB-SubCell"/>
</dbReference>
<dbReference type="GO" id="GO:0000287">
    <property type="term" value="F:magnesium ion binding"/>
    <property type="evidence" value="ECO:0007669"/>
    <property type="project" value="UniProtKB-UniRule"/>
</dbReference>
<dbReference type="GO" id="GO:0003676">
    <property type="term" value="F:nucleic acid binding"/>
    <property type="evidence" value="ECO:0007669"/>
    <property type="project" value="InterPro"/>
</dbReference>
<dbReference type="GO" id="GO:0004523">
    <property type="term" value="F:RNA-DNA hybrid ribonuclease activity"/>
    <property type="evidence" value="ECO:0007669"/>
    <property type="project" value="UniProtKB-UniRule"/>
</dbReference>
<dbReference type="GO" id="GO:0043137">
    <property type="term" value="P:DNA replication, removal of RNA primer"/>
    <property type="evidence" value="ECO:0007669"/>
    <property type="project" value="TreeGrafter"/>
</dbReference>
<dbReference type="CDD" id="cd09278">
    <property type="entry name" value="RNase_HI_prokaryote_like"/>
    <property type="match status" value="1"/>
</dbReference>
<dbReference type="FunFam" id="3.30.420.10:FF:000089">
    <property type="entry name" value="Ribonuclease H"/>
    <property type="match status" value="1"/>
</dbReference>
<dbReference type="Gene3D" id="3.30.420.10">
    <property type="entry name" value="Ribonuclease H-like superfamily/Ribonuclease H"/>
    <property type="match status" value="1"/>
</dbReference>
<dbReference type="HAMAP" id="MF_00042">
    <property type="entry name" value="RNase_H"/>
    <property type="match status" value="1"/>
</dbReference>
<dbReference type="InterPro" id="IPR050092">
    <property type="entry name" value="RNase_H"/>
</dbReference>
<dbReference type="InterPro" id="IPR012337">
    <property type="entry name" value="RNaseH-like_sf"/>
</dbReference>
<dbReference type="InterPro" id="IPR002156">
    <property type="entry name" value="RNaseH_domain"/>
</dbReference>
<dbReference type="InterPro" id="IPR036397">
    <property type="entry name" value="RNaseH_sf"/>
</dbReference>
<dbReference type="InterPro" id="IPR022892">
    <property type="entry name" value="RNaseHI"/>
</dbReference>
<dbReference type="NCBIfam" id="NF001236">
    <property type="entry name" value="PRK00203.1"/>
    <property type="match status" value="1"/>
</dbReference>
<dbReference type="PANTHER" id="PTHR10642">
    <property type="entry name" value="RIBONUCLEASE H1"/>
    <property type="match status" value="1"/>
</dbReference>
<dbReference type="PANTHER" id="PTHR10642:SF26">
    <property type="entry name" value="RIBONUCLEASE H1"/>
    <property type="match status" value="1"/>
</dbReference>
<dbReference type="Pfam" id="PF00075">
    <property type="entry name" value="RNase_H"/>
    <property type="match status" value="1"/>
</dbReference>
<dbReference type="SUPFAM" id="SSF53098">
    <property type="entry name" value="Ribonuclease H-like"/>
    <property type="match status" value="1"/>
</dbReference>
<dbReference type="PROSITE" id="PS50879">
    <property type="entry name" value="RNASE_H_1"/>
    <property type="match status" value="1"/>
</dbReference>
<evidence type="ECO:0000255" key="1">
    <source>
        <dbReference type="HAMAP-Rule" id="MF_00042"/>
    </source>
</evidence>
<evidence type="ECO:0000255" key="2">
    <source>
        <dbReference type="PROSITE-ProRule" id="PRU00408"/>
    </source>
</evidence>
<gene>
    <name evidence="1" type="primary">rnhA</name>
    <name type="ordered locus">Paes_0543</name>
</gene>
<keyword id="KW-0963">Cytoplasm</keyword>
<keyword id="KW-0255">Endonuclease</keyword>
<keyword id="KW-0378">Hydrolase</keyword>
<keyword id="KW-0460">Magnesium</keyword>
<keyword id="KW-0479">Metal-binding</keyword>
<keyword id="KW-0540">Nuclease</keyword>